<keyword id="KW-0963">Cytoplasm</keyword>
<keyword id="KW-0460">Magnesium</keyword>
<keyword id="KW-0479">Metal-binding</keyword>
<keyword id="KW-0566">Pantothenate biosynthesis</keyword>
<keyword id="KW-0808">Transferase</keyword>
<feature type="chain" id="PRO_1000096986" description="3-methyl-2-oxobutanoate hydroxymethyltransferase">
    <location>
        <begin position="1"/>
        <end position="287"/>
    </location>
</feature>
<feature type="active site" description="Proton acceptor" evidence="1">
    <location>
        <position position="194"/>
    </location>
</feature>
<feature type="binding site" evidence="1">
    <location>
        <begin position="57"/>
        <end position="58"/>
    </location>
    <ligand>
        <name>3-methyl-2-oxobutanoate</name>
        <dbReference type="ChEBI" id="CHEBI:11851"/>
    </ligand>
</feature>
<feature type="binding site" evidence="1">
    <location>
        <position position="57"/>
    </location>
    <ligand>
        <name>Mg(2+)</name>
        <dbReference type="ChEBI" id="CHEBI:18420"/>
    </ligand>
</feature>
<feature type="binding site" evidence="1">
    <location>
        <position position="96"/>
    </location>
    <ligand>
        <name>3-methyl-2-oxobutanoate</name>
        <dbReference type="ChEBI" id="CHEBI:11851"/>
    </ligand>
</feature>
<feature type="binding site" evidence="1">
    <location>
        <position position="96"/>
    </location>
    <ligand>
        <name>Mg(2+)</name>
        <dbReference type="ChEBI" id="CHEBI:18420"/>
    </ligand>
</feature>
<feature type="binding site" evidence="1">
    <location>
        <position position="125"/>
    </location>
    <ligand>
        <name>3-methyl-2-oxobutanoate</name>
        <dbReference type="ChEBI" id="CHEBI:11851"/>
    </ligand>
</feature>
<feature type="binding site" evidence="1">
    <location>
        <position position="127"/>
    </location>
    <ligand>
        <name>Mg(2+)</name>
        <dbReference type="ChEBI" id="CHEBI:18420"/>
    </ligand>
</feature>
<reference key="1">
    <citation type="submission" date="2008-02" db="EMBL/GenBank/DDBJ databases">
        <title>Complete sequence of chromosome of Methylobacterium sp. 4-46.</title>
        <authorList>
            <consortium name="US DOE Joint Genome Institute"/>
            <person name="Copeland A."/>
            <person name="Lucas S."/>
            <person name="Lapidus A."/>
            <person name="Glavina del Rio T."/>
            <person name="Dalin E."/>
            <person name="Tice H."/>
            <person name="Bruce D."/>
            <person name="Goodwin L."/>
            <person name="Pitluck S."/>
            <person name="Chertkov O."/>
            <person name="Brettin T."/>
            <person name="Detter J.C."/>
            <person name="Han C."/>
            <person name="Kuske C.R."/>
            <person name="Schmutz J."/>
            <person name="Larimer F."/>
            <person name="Land M."/>
            <person name="Hauser L."/>
            <person name="Kyrpides N."/>
            <person name="Ivanova N."/>
            <person name="Marx C.J."/>
            <person name="Richardson P."/>
        </authorList>
    </citation>
    <scope>NUCLEOTIDE SEQUENCE [LARGE SCALE GENOMIC DNA]</scope>
    <source>
        <strain>4-46</strain>
    </source>
</reference>
<dbReference type="EC" id="2.1.2.11" evidence="1"/>
<dbReference type="EMBL" id="CP000943">
    <property type="protein sequence ID" value="ACA18923.1"/>
    <property type="molecule type" value="Genomic_DNA"/>
</dbReference>
<dbReference type="RefSeq" id="WP_012334312.1">
    <property type="nucleotide sequence ID" value="NC_010511.1"/>
</dbReference>
<dbReference type="SMR" id="B0UQT7"/>
<dbReference type="STRING" id="426117.M446_4582"/>
<dbReference type="KEGG" id="met:M446_4582"/>
<dbReference type="eggNOG" id="COG0413">
    <property type="taxonomic scope" value="Bacteria"/>
</dbReference>
<dbReference type="HOGENOM" id="CLU_036645_1_0_5"/>
<dbReference type="UniPathway" id="UPA00028">
    <property type="reaction ID" value="UER00003"/>
</dbReference>
<dbReference type="GO" id="GO:0005737">
    <property type="term" value="C:cytoplasm"/>
    <property type="evidence" value="ECO:0007669"/>
    <property type="project" value="UniProtKB-SubCell"/>
</dbReference>
<dbReference type="GO" id="GO:0003864">
    <property type="term" value="F:3-methyl-2-oxobutanoate hydroxymethyltransferase activity"/>
    <property type="evidence" value="ECO:0007669"/>
    <property type="project" value="UniProtKB-UniRule"/>
</dbReference>
<dbReference type="GO" id="GO:0000287">
    <property type="term" value="F:magnesium ion binding"/>
    <property type="evidence" value="ECO:0007669"/>
    <property type="project" value="TreeGrafter"/>
</dbReference>
<dbReference type="GO" id="GO:0015940">
    <property type="term" value="P:pantothenate biosynthetic process"/>
    <property type="evidence" value="ECO:0007669"/>
    <property type="project" value="UniProtKB-UniRule"/>
</dbReference>
<dbReference type="CDD" id="cd06557">
    <property type="entry name" value="KPHMT-like"/>
    <property type="match status" value="1"/>
</dbReference>
<dbReference type="FunFam" id="3.20.20.60:FF:000003">
    <property type="entry name" value="3-methyl-2-oxobutanoate hydroxymethyltransferase"/>
    <property type="match status" value="1"/>
</dbReference>
<dbReference type="Gene3D" id="3.20.20.60">
    <property type="entry name" value="Phosphoenolpyruvate-binding domains"/>
    <property type="match status" value="1"/>
</dbReference>
<dbReference type="HAMAP" id="MF_00156">
    <property type="entry name" value="PanB"/>
    <property type="match status" value="1"/>
</dbReference>
<dbReference type="InterPro" id="IPR003700">
    <property type="entry name" value="Pantoate_hydroxy_MeTrfase"/>
</dbReference>
<dbReference type="InterPro" id="IPR015813">
    <property type="entry name" value="Pyrv/PenolPyrv_kinase-like_dom"/>
</dbReference>
<dbReference type="InterPro" id="IPR040442">
    <property type="entry name" value="Pyrv_kinase-like_dom_sf"/>
</dbReference>
<dbReference type="NCBIfam" id="TIGR00222">
    <property type="entry name" value="panB"/>
    <property type="match status" value="1"/>
</dbReference>
<dbReference type="NCBIfam" id="NF001452">
    <property type="entry name" value="PRK00311.1"/>
    <property type="match status" value="1"/>
</dbReference>
<dbReference type="PANTHER" id="PTHR20881">
    <property type="entry name" value="3-METHYL-2-OXOBUTANOATE HYDROXYMETHYLTRANSFERASE"/>
    <property type="match status" value="1"/>
</dbReference>
<dbReference type="PANTHER" id="PTHR20881:SF0">
    <property type="entry name" value="3-METHYL-2-OXOBUTANOATE HYDROXYMETHYLTRANSFERASE"/>
    <property type="match status" value="1"/>
</dbReference>
<dbReference type="Pfam" id="PF02548">
    <property type="entry name" value="Pantoate_transf"/>
    <property type="match status" value="1"/>
</dbReference>
<dbReference type="PIRSF" id="PIRSF000388">
    <property type="entry name" value="Pantoate_hydroxy_MeTrfase"/>
    <property type="match status" value="1"/>
</dbReference>
<dbReference type="SUPFAM" id="SSF51621">
    <property type="entry name" value="Phosphoenolpyruvate/pyruvate domain"/>
    <property type="match status" value="1"/>
</dbReference>
<comment type="function">
    <text evidence="1">Catalyzes the reversible reaction in which hydroxymethyl group from 5,10-methylenetetrahydrofolate is transferred onto alpha-ketoisovalerate to form ketopantoate.</text>
</comment>
<comment type="catalytic activity">
    <reaction evidence="1">
        <text>3-methyl-2-oxobutanoate + (6R)-5,10-methylene-5,6,7,8-tetrahydrofolate + H2O = 2-dehydropantoate + (6S)-5,6,7,8-tetrahydrofolate</text>
        <dbReference type="Rhea" id="RHEA:11824"/>
        <dbReference type="ChEBI" id="CHEBI:11561"/>
        <dbReference type="ChEBI" id="CHEBI:11851"/>
        <dbReference type="ChEBI" id="CHEBI:15377"/>
        <dbReference type="ChEBI" id="CHEBI:15636"/>
        <dbReference type="ChEBI" id="CHEBI:57453"/>
        <dbReference type="EC" id="2.1.2.11"/>
    </reaction>
</comment>
<comment type="cofactor">
    <cofactor evidence="1">
        <name>Mg(2+)</name>
        <dbReference type="ChEBI" id="CHEBI:18420"/>
    </cofactor>
    <text evidence="1">Binds 1 Mg(2+) ion per subunit.</text>
</comment>
<comment type="pathway">
    <text evidence="1">Cofactor biosynthesis; (R)-pantothenate biosynthesis; (R)-pantoate from 3-methyl-2-oxobutanoate: step 1/2.</text>
</comment>
<comment type="subunit">
    <text evidence="1">Homodecamer; pentamer of dimers.</text>
</comment>
<comment type="subcellular location">
    <subcellularLocation>
        <location evidence="1">Cytoplasm</location>
    </subcellularLocation>
</comment>
<comment type="similarity">
    <text evidence="1">Belongs to the PanB family.</text>
</comment>
<protein>
    <recommendedName>
        <fullName evidence="1">3-methyl-2-oxobutanoate hydroxymethyltransferase</fullName>
        <ecNumber evidence="1">2.1.2.11</ecNumber>
    </recommendedName>
    <alternativeName>
        <fullName evidence="1">Ketopantoate hydroxymethyltransferase</fullName>
        <shortName evidence="1">KPHMT</shortName>
    </alternativeName>
</protein>
<evidence type="ECO:0000255" key="1">
    <source>
        <dbReference type="HAMAP-Rule" id="MF_00156"/>
    </source>
</evidence>
<proteinExistence type="inferred from homology"/>
<gene>
    <name evidence="1" type="primary">panB</name>
    <name type="ordered locus">M446_4582</name>
</gene>
<sequence length="287" mass="30186">MSHHPDPPATPPASPPVTIPMLQAWRAEGRRIVMVTAYDAAMARLVDPVVDVILVGDSVGNVCLGFDNTLPVSLAMMNHHVEAVARARPRALLVADMPFLTFHLDLPDTIRNAGGFLQRGAAAVKLEGGAARVPVVEALVACEIPVMGHLGLTPQSVNAMGGFKVQGRAVAQARRIVEDAKRLEDAGCFSLVLEGIPAELAARITEALAIPTIGIGAGPHCAGQVLVLHDLLGLLPGRKAKFVRTYVDGYGLLQAGLAAYAEDVRAGRFPGPEESYALPEAVRAALD</sequence>
<name>PANB_METS4</name>
<accession>B0UQT7</accession>
<organism>
    <name type="scientific">Methylobacterium sp. (strain 4-46)</name>
    <dbReference type="NCBI Taxonomy" id="426117"/>
    <lineage>
        <taxon>Bacteria</taxon>
        <taxon>Pseudomonadati</taxon>
        <taxon>Pseudomonadota</taxon>
        <taxon>Alphaproteobacteria</taxon>
        <taxon>Hyphomicrobiales</taxon>
        <taxon>Methylobacteriaceae</taxon>
        <taxon>Methylobacterium</taxon>
    </lineage>
</organism>